<keyword id="KW-0574">Periplasm</keyword>
<keyword id="KW-1185">Reference proteome</keyword>
<keyword id="KW-0732">Signal</keyword>
<accession>Q88D47</accession>
<gene>
    <name type="ordered locus">PP_4981</name>
</gene>
<evidence type="ECO:0000255" key="1">
    <source>
        <dbReference type="HAMAP-Rule" id="MF_00780"/>
    </source>
</evidence>
<evidence type="ECO:0000305" key="2"/>
<protein>
    <recommendedName>
        <fullName evidence="1">UPF0312 protein PP_4981</fullName>
    </recommendedName>
</protein>
<organism>
    <name type="scientific">Pseudomonas putida (strain ATCC 47054 / DSM 6125 / CFBP 8728 / NCIMB 11950 / KT2440)</name>
    <dbReference type="NCBI Taxonomy" id="160488"/>
    <lineage>
        <taxon>Bacteria</taxon>
        <taxon>Pseudomonadati</taxon>
        <taxon>Pseudomonadota</taxon>
        <taxon>Gammaproteobacteria</taxon>
        <taxon>Pseudomonadales</taxon>
        <taxon>Pseudomonadaceae</taxon>
        <taxon>Pseudomonas</taxon>
    </lineage>
</organism>
<sequence length="192" mass="20694">MLKKTFAALALGTALLSAGQAMAAEYKIDKEGQHAFVDWKISHLGYSFIHGTFKDFDGNFSWDSAKPEASKISVDLKTASLWSNHAERDKHIASADFLDVKKYPDAKFVSTSVKSTGDKTADVTGDLTMHGVTKPVTFKATFNGEGKDPWGGERAGFNATTTLNLNDFGIKGPGATSQTLDLDISVEGVKQK</sequence>
<feature type="signal peptide" evidence="1">
    <location>
        <begin position="1"/>
        <end position="23"/>
    </location>
</feature>
<feature type="chain" id="PRO_0000036281" description="UPF0312 protein PP_4981">
    <location>
        <begin position="24"/>
        <end position="192"/>
    </location>
</feature>
<proteinExistence type="inferred from homology"/>
<comment type="subcellular location">
    <subcellularLocation>
        <location evidence="1">Periplasm</location>
    </subcellularLocation>
</comment>
<comment type="similarity">
    <text evidence="1">Belongs to the UPF0312 family. Type 1 subfamily.</text>
</comment>
<comment type="sequence caution" evidence="2">
    <conflict type="erroneous initiation">
        <sequence resource="EMBL-CDS" id="AAN70547"/>
    </conflict>
</comment>
<dbReference type="EMBL" id="AE015451">
    <property type="protein sequence ID" value="AAN70547.1"/>
    <property type="status" value="ALT_INIT"/>
    <property type="molecule type" value="Genomic_DNA"/>
</dbReference>
<dbReference type="RefSeq" id="NP_747083.1">
    <property type="nucleotide sequence ID" value="NC_002947.4"/>
</dbReference>
<dbReference type="RefSeq" id="WP_003249350.1">
    <property type="nucleotide sequence ID" value="NZ_CP169744.1"/>
</dbReference>
<dbReference type="SMR" id="Q88D47"/>
<dbReference type="STRING" id="160488.PP_4981"/>
<dbReference type="PaxDb" id="160488-PP_4981"/>
<dbReference type="KEGG" id="ppu:PP_4981"/>
<dbReference type="PATRIC" id="fig|160488.4.peg.5320"/>
<dbReference type="eggNOG" id="COG2353">
    <property type="taxonomic scope" value="Bacteria"/>
</dbReference>
<dbReference type="HOGENOM" id="CLU_071003_1_2_6"/>
<dbReference type="OrthoDB" id="9811006at2"/>
<dbReference type="PhylomeDB" id="Q88D47"/>
<dbReference type="Proteomes" id="UP000000556">
    <property type="component" value="Chromosome"/>
</dbReference>
<dbReference type="GO" id="GO:0042597">
    <property type="term" value="C:periplasmic space"/>
    <property type="evidence" value="ECO:0007669"/>
    <property type="project" value="UniProtKB-SubCell"/>
</dbReference>
<dbReference type="Gene3D" id="2.40.128.110">
    <property type="entry name" value="Lipid/polyisoprenoid-binding, YceI-like"/>
    <property type="match status" value="1"/>
</dbReference>
<dbReference type="HAMAP" id="MF_00780">
    <property type="entry name" value="UPF0312"/>
    <property type="match status" value="1"/>
</dbReference>
<dbReference type="InterPro" id="IPR007372">
    <property type="entry name" value="Lipid/polyisoprenoid-bd_YceI"/>
</dbReference>
<dbReference type="InterPro" id="IPR036761">
    <property type="entry name" value="TTHA0802/YceI-like_sf"/>
</dbReference>
<dbReference type="InterPro" id="IPR023480">
    <property type="entry name" value="UPF0312/YceI"/>
</dbReference>
<dbReference type="NCBIfam" id="NF002994">
    <property type="entry name" value="PRK03757.1"/>
    <property type="match status" value="1"/>
</dbReference>
<dbReference type="PANTHER" id="PTHR34406">
    <property type="entry name" value="PROTEIN YCEI"/>
    <property type="match status" value="1"/>
</dbReference>
<dbReference type="PANTHER" id="PTHR34406:SF1">
    <property type="entry name" value="PROTEIN YCEI"/>
    <property type="match status" value="1"/>
</dbReference>
<dbReference type="Pfam" id="PF04264">
    <property type="entry name" value="YceI"/>
    <property type="match status" value="1"/>
</dbReference>
<dbReference type="SMART" id="SM00867">
    <property type="entry name" value="YceI"/>
    <property type="match status" value="1"/>
</dbReference>
<dbReference type="SUPFAM" id="SSF101874">
    <property type="entry name" value="YceI-like"/>
    <property type="match status" value="1"/>
</dbReference>
<reference key="1">
    <citation type="journal article" date="2002" name="Environ. Microbiol.">
        <title>Complete genome sequence and comparative analysis of the metabolically versatile Pseudomonas putida KT2440.</title>
        <authorList>
            <person name="Nelson K.E."/>
            <person name="Weinel C."/>
            <person name="Paulsen I.T."/>
            <person name="Dodson R.J."/>
            <person name="Hilbert H."/>
            <person name="Martins dos Santos V.A.P."/>
            <person name="Fouts D.E."/>
            <person name="Gill S.R."/>
            <person name="Pop M."/>
            <person name="Holmes M."/>
            <person name="Brinkac L.M."/>
            <person name="Beanan M.J."/>
            <person name="DeBoy R.T."/>
            <person name="Daugherty S.C."/>
            <person name="Kolonay J.F."/>
            <person name="Madupu R."/>
            <person name="Nelson W.C."/>
            <person name="White O."/>
            <person name="Peterson J.D."/>
            <person name="Khouri H.M."/>
            <person name="Hance I."/>
            <person name="Chris Lee P."/>
            <person name="Holtzapple E.K."/>
            <person name="Scanlan D."/>
            <person name="Tran K."/>
            <person name="Moazzez A."/>
            <person name="Utterback T.R."/>
            <person name="Rizzo M."/>
            <person name="Lee K."/>
            <person name="Kosack D."/>
            <person name="Moestl D."/>
            <person name="Wedler H."/>
            <person name="Lauber J."/>
            <person name="Stjepandic D."/>
            <person name="Hoheisel J."/>
            <person name="Straetz M."/>
            <person name="Heim S."/>
            <person name="Kiewitz C."/>
            <person name="Eisen J.A."/>
            <person name="Timmis K.N."/>
            <person name="Duesterhoeft A."/>
            <person name="Tuemmler B."/>
            <person name="Fraser C.M."/>
        </authorList>
    </citation>
    <scope>NUCLEOTIDE SEQUENCE [LARGE SCALE GENOMIC DNA]</scope>
    <source>
        <strain>ATCC 47054 / DSM 6125 / CFBP 8728 / NCIMB 11950 / KT2440</strain>
    </source>
</reference>
<name>Y4981_PSEPK</name>